<accession>B1P1B4</accession>
<accession>P0CH53</accession>
<comment type="function">
    <text>Probable ion channel inhibitor.</text>
</comment>
<comment type="subcellular location">
    <subcellularLocation>
        <location evidence="1">Secreted</location>
    </subcellularLocation>
</comment>
<comment type="tissue specificity">
    <text evidence="6">Expressed by the venom gland.</text>
</comment>
<comment type="domain">
    <text evidence="1">The presence of a 'disulfide through disulfide knot' structurally defines this protein as a knottin.</text>
</comment>
<comment type="similarity">
    <text>Belongs to the neurotoxin 36 family. 02 subfamily.</text>
</comment>
<sequence length="64" mass="7119">MTRKILAVLLVFTLVACNNAEKYSETDVEDSPMIQERRCEPSGKPCRPLMRIPCCGSCVRGKCA</sequence>
<name>JZT51_CHIGU</name>
<keyword id="KW-0903">Direct protein sequencing</keyword>
<keyword id="KW-1015">Disulfide bond</keyword>
<keyword id="KW-0872">Ion channel impairing toxin</keyword>
<keyword id="KW-0960">Knottin</keyword>
<keyword id="KW-0964">Secreted</keyword>
<keyword id="KW-0732">Signal</keyword>
<keyword id="KW-0800">Toxin</keyword>
<feature type="signal peptide" evidence="2">
    <location>
        <begin position="1"/>
        <end position="20"/>
    </location>
</feature>
<feature type="propeptide" id="PRO_0000398516" evidence="6">
    <location>
        <begin position="21"/>
        <end position="38"/>
    </location>
</feature>
<feature type="peptide" id="PRO_0000398517" description="U6-theraphotoxin-Cg1a">
    <location>
        <begin position="39"/>
        <end position="64"/>
    </location>
</feature>
<feature type="disulfide bond" evidence="1">
    <location>
        <begin position="39"/>
        <end position="55"/>
    </location>
</feature>
<feature type="disulfide bond" evidence="1">
    <location>
        <begin position="46"/>
        <end position="58"/>
    </location>
</feature>
<feature type="disulfide bond" evidence="1">
    <location>
        <begin position="54"/>
        <end position="63"/>
    </location>
</feature>
<feature type="sequence conflict" description="In Ref. 2; AA sequence." evidence="5" ref="2">
    <original>R</original>
    <variation>T</variation>
    <location>
        <position position="38"/>
    </location>
</feature>
<evidence type="ECO:0000250" key="1"/>
<evidence type="ECO:0000255" key="2"/>
<evidence type="ECO:0000303" key="3">
    <source>
    </source>
</evidence>
<evidence type="ECO:0000303" key="4">
    <source>
    </source>
</evidence>
<evidence type="ECO:0000305" key="5"/>
<evidence type="ECO:0000305" key="6">
    <source>
    </source>
</evidence>
<organism>
    <name type="scientific">Chilobrachys guangxiensis</name>
    <name type="common">Chinese earth tiger tarantula</name>
    <name type="synonym">Chilobrachys jingzhao</name>
    <dbReference type="NCBI Taxonomy" id="278060"/>
    <lineage>
        <taxon>Eukaryota</taxon>
        <taxon>Metazoa</taxon>
        <taxon>Ecdysozoa</taxon>
        <taxon>Arthropoda</taxon>
        <taxon>Chelicerata</taxon>
        <taxon>Arachnida</taxon>
        <taxon>Araneae</taxon>
        <taxon>Mygalomorphae</taxon>
        <taxon>Theraphosidae</taxon>
        <taxon>Chilobrachys</taxon>
    </lineage>
</organism>
<reference key="1">
    <citation type="journal article" date="2008" name="Cell. Mol. Life Sci.">
        <title>Molecular diversity and evolution of cystine knot toxins of the tarantula Chilobrachys jingzhao.</title>
        <authorList>
            <person name="Chen J."/>
            <person name="Deng M."/>
            <person name="He Q."/>
            <person name="Meng E."/>
            <person name="Jiang L."/>
            <person name="Liao Z."/>
            <person name="Rong M."/>
            <person name="Liang S."/>
        </authorList>
    </citation>
    <scope>NUCLEOTIDE SEQUENCE [LARGE SCALE MRNA]</scope>
    <source>
        <tissue>Venom gland</tissue>
    </source>
</reference>
<reference key="2">
    <citation type="journal article" date="2007" name="Proteomics">
        <title>Proteomic and peptidomic analysis of the venom from Chinese tarantula Chilobrachys jingzhao.</title>
        <authorList>
            <person name="Liao Z."/>
            <person name="Cao J."/>
            <person name="Li S."/>
            <person name="Yan X."/>
            <person name="Hu W."/>
            <person name="He Q."/>
            <person name="Chen J."/>
            <person name="Tang J."/>
            <person name="Xie J."/>
            <person name="Liang S."/>
        </authorList>
    </citation>
    <scope>PROTEIN SEQUENCE OF 38-64</scope>
    <scope>IDENTIFICATION BY MASS SPECTROMETRY</scope>
    <source>
        <tissue>Venom</tissue>
    </source>
</reference>
<dbReference type="EMBL" id="EU233845">
    <property type="protein sequence ID" value="ABY71664.1"/>
    <property type="molecule type" value="mRNA"/>
</dbReference>
<dbReference type="SMR" id="B1P1B4"/>
<dbReference type="ArachnoServer" id="AS000794">
    <property type="toxin name" value="U6-theraphotoxin-Cg1a"/>
</dbReference>
<dbReference type="GO" id="GO:0005576">
    <property type="term" value="C:extracellular region"/>
    <property type="evidence" value="ECO:0007669"/>
    <property type="project" value="UniProtKB-SubCell"/>
</dbReference>
<dbReference type="GO" id="GO:0099106">
    <property type="term" value="F:ion channel regulator activity"/>
    <property type="evidence" value="ECO:0007669"/>
    <property type="project" value="UniProtKB-KW"/>
</dbReference>
<dbReference type="GO" id="GO:0090729">
    <property type="term" value="F:toxin activity"/>
    <property type="evidence" value="ECO:0007669"/>
    <property type="project" value="UniProtKB-KW"/>
</dbReference>
<dbReference type="SUPFAM" id="SSF57059">
    <property type="entry name" value="omega toxin-like"/>
    <property type="match status" value="1"/>
</dbReference>
<proteinExistence type="evidence at protein level"/>
<protein>
    <recommendedName>
        <fullName>U6-theraphotoxin-Cg1a</fullName>
        <shortName>U6-TRTX-Cg1a</shortName>
    </recommendedName>
    <alternativeName>
        <fullName evidence="3">Jingzhaotoxin F7-8.06</fullName>
    </alternativeName>
    <alternativeName>
        <fullName evidence="4">Jingzhaotoxin-51</fullName>
        <shortName evidence="4">JZTX-51</shortName>
    </alternativeName>
    <alternativeName>
        <fullName evidence="3">Peptide F7-8.06</fullName>
    </alternativeName>
</protein>